<gene>
    <name evidence="1" type="primary">ligA</name>
    <name type="ordered locus">R02164</name>
    <name type="ORF">SMc01878</name>
</gene>
<comment type="function">
    <text evidence="1">DNA ligase that catalyzes the formation of phosphodiester linkages between 5'-phosphoryl and 3'-hydroxyl groups in double-stranded DNA using NAD as a coenzyme and as the energy source for the reaction. It is essential for DNA replication and repair of damaged DNA.</text>
</comment>
<comment type="catalytic activity">
    <reaction evidence="1">
        <text>NAD(+) + (deoxyribonucleotide)n-3'-hydroxyl + 5'-phospho-(deoxyribonucleotide)m = (deoxyribonucleotide)n+m + AMP + beta-nicotinamide D-nucleotide.</text>
        <dbReference type="EC" id="6.5.1.2"/>
    </reaction>
</comment>
<comment type="cofactor">
    <cofactor evidence="1">
        <name>Mg(2+)</name>
        <dbReference type="ChEBI" id="CHEBI:18420"/>
    </cofactor>
    <cofactor evidence="1">
        <name>Mn(2+)</name>
        <dbReference type="ChEBI" id="CHEBI:29035"/>
    </cofactor>
</comment>
<comment type="similarity">
    <text evidence="1">Belongs to the NAD-dependent DNA ligase family. LigA subfamily.</text>
</comment>
<evidence type="ECO:0000255" key="1">
    <source>
        <dbReference type="HAMAP-Rule" id="MF_01588"/>
    </source>
</evidence>
<proteinExistence type="inferred from homology"/>
<protein>
    <recommendedName>
        <fullName evidence="1">DNA ligase</fullName>
        <ecNumber evidence="1">6.5.1.2</ecNumber>
    </recommendedName>
    <alternativeName>
        <fullName evidence="1">Polydeoxyribonucleotide synthase [NAD(+)]</fullName>
    </alternativeName>
</protein>
<dbReference type="EC" id="6.5.1.2" evidence="1"/>
<dbReference type="EMBL" id="AL591688">
    <property type="protein sequence ID" value="CAC46743.1"/>
    <property type="molecule type" value="Genomic_DNA"/>
</dbReference>
<dbReference type="RefSeq" id="NP_386270.1">
    <property type="nucleotide sequence ID" value="NC_003047.1"/>
</dbReference>
<dbReference type="RefSeq" id="WP_010969738.1">
    <property type="nucleotide sequence ID" value="NC_003047.1"/>
</dbReference>
<dbReference type="SMR" id="Q92NM8"/>
<dbReference type="EnsemblBacteria" id="CAC46743">
    <property type="protein sequence ID" value="CAC46743"/>
    <property type="gene ID" value="SMc01878"/>
</dbReference>
<dbReference type="KEGG" id="sme:SMc01878"/>
<dbReference type="PATRIC" id="fig|266834.11.peg.3630"/>
<dbReference type="eggNOG" id="COG0272">
    <property type="taxonomic scope" value="Bacteria"/>
</dbReference>
<dbReference type="HOGENOM" id="CLU_007764_2_1_5"/>
<dbReference type="OrthoDB" id="9759736at2"/>
<dbReference type="Proteomes" id="UP000001976">
    <property type="component" value="Chromosome"/>
</dbReference>
<dbReference type="GO" id="GO:0005829">
    <property type="term" value="C:cytosol"/>
    <property type="evidence" value="ECO:0007669"/>
    <property type="project" value="TreeGrafter"/>
</dbReference>
<dbReference type="GO" id="GO:0003677">
    <property type="term" value="F:DNA binding"/>
    <property type="evidence" value="ECO:0007669"/>
    <property type="project" value="InterPro"/>
</dbReference>
<dbReference type="GO" id="GO:0003911">
    <property type="term" value="F:DNA ligase (NAD+) activity"/>
    <property type="evidence" value="ECO:0007669"/>
    <property type="project" value="UniProtKB-UniRule"/>
</dbReference>
<dbReference type="GO" id="GO:0046872">
    <property type="term" value="F:metal ion binding"/>
    <property type="evidence" value="ECO:0007669"/>
    <property type="project" value="UniProtKB-KW"/>
</dbReference>
<dbReference type="GO" id="GO:0006281">
    <property type="term" value="P:DNA repair"/>
    <property type="evidence" value="ECO:0007669"/>
    <property type="project" value="UniProtKB-KW"/>
</dbReference>
<dbReference type="GO" id="GO:0006260">
    <property type="term" value="P:DNA replication"/>
    <property type="evidence" value="ECO:0007669"/>
    <property type="project" value="UniProtKB-KW"/>
</dbReference>
<dbReference type="CDD" id="cd17748">
    <property type="entry name" value="BRCT_DNA_ligase_like"/>
    <property type="match status" value="1"/>
</dbReference>
<dbReference type="CDD" id="cd00114">
    <property type="entry name" value="LIGANc"/>
    <property type="match status" value="1"/>
</dbReference>
<dbReference type="FunFam" id="3.30.470.30:FF:000001">
    <property type="entry name" value="DNA ligase"/>
    <property type="match status" value="1"/>
</dbReference>
<dbReference type="Gene3D" id="6.20.10.30">
    <property type="match status" value="1"/>
</dbReference>
<dbReference type="Gene3D" id="1.10.150.20">
    <property type="entry name" value="5' to 3' exonuclease, C-terminal subdomain"/>
    <property type="match status" value="2"/>
</dbReference>
<dbReference type="Gene3D" id="3.40.50.10190">
    <property type="entry name" value="BRCT domain"/>
    <property type="match status" value="1"/>
</dbReference>
<dbReference type="Gene3D" id="3.30.470.30">
    <property type="entry name" value="DNA ligase/mRNA capping enzyme"/>
    <property type="match status" value="1"/>
</dbReference>
<dbReference type="Gene3D" id="1.10.287.610">
    <property type="entry name" value="Helix hairpin bin"/>
    <property type="match status" value="1"/>
</dbReference>
<dbReference type="Gene3D" id="2.40.50.140">
    <property type="entry name" value="Nucleic acid-binding proteins"/>
    <property type="match status" value="1"/>
</dbReference>
<dbReference type="HAMAP" id="MF_01588">
    <property type="entry name" value="DNA_ligase_A"/>
    <property type="match status" value="1"/>
</dbReference>
<dbReference type="InterPro" id="IPR001357">
    <property type="entry name" value="BRCT_dom"/>
</dbReference>
<dbReference type="InterPro" id="IPR036420">
    <property type="entry name" value="BRCT_dom_sf"/>
</dbReference>
<dbReference type="InterPro" id="IPR041663">
    <property type="entry name" value="DisA/LigA_HHH"/>
</dbReference>
<dbReference type="InterPro" id="IPR001679">
    <property type="entry name" value="DNA_ligase"/>
</dbReference>
<dbReference type="InterPro" id="IPR018239">
    <property type="entry name" value="DNA_ligase_AS"/>
</dbReference>
<dbReference type="InterPro" id="IPR033136">
    <property type="entry name" value="DNA_ligase_CS"/>
</dbReference>
<dbReference type="InterPro" id="IPR013839">
    <property type="entry name" value="DNAligase_adenylation"/>
</dbReference>
<dbReference type="InterPro" id="IPR013840">
    <property type="entry name" value="DNAligase_N"/>
</dbReference>
<dbReference type="InterPro" id="IPR003583">
    <property type="entry name" value="Hlx-hairpin-Hlx_DNA-bd_motif"/>
</dbReference>
<dbReference type="InterPro" id="IPR012340">
    <property type="entry name" value="NA-bd_OB-fold"/>
</dbReference>
<dbReference type="InterPro" id="IPR004150">
    <property type="entry name" value="NAD_DNA_ligase_OB"/>
</dbReference>
<dbReference type="InterPro" id="IPR010994">
    <property type="entry name" value="RuvA_2-like"/>
</dbReference>
<dbReference type="NCBIfam" id="TIGR00575">
    <property type="entry name" value="dnlj"/>
    <property type="match status" value="1"/>
</dbReference>
<dbReference type="NCBIfam" id="NF005932">
    <property type="entry name" value="PRK07956.1"/>
    <property type="match status" value="1"/>
</dbReference>
<dbReference type="PANTHER" id="PTHR23389">
    <property type="entry name" value="CHROMOSOME TRANSMISSION FIDELITY FACTOR 18"/>
    <property type="match status" value="1"/>
</dbReference>
<dbReference type="PANTHER" id="PTHR23389:SF9">
    <property type="entry name" value="DNA LIGASE"/>
    <property type="match status" value="1"/>
</dbReference>
<dbReference type="Pfam" id="PF00533">
    <property type="entry name" value="BRCT"/>
    <property type="match status" value="1"/>
</dbReference>
<dbReference type="Pfam" id="PF01653">
    <property type="entry name" value="DNA_ligase_aden"/>
    <property type="match status" value="1"/>
</dbReference>
<dbReference type="Pfam" id="PF03120">
    <property type="entry name" value="DNA_ligase_OB"/>
    <property type="match status" value="1"/>
</dbReference>
<dbReference type="Pfam" id="PF12826">
    <property type="entry name" value="HHH_2"/>
    <property type="match status" value="1"/>
</dbReference>
<dbReference type="PIRSF" id="PIRSF001604">
    <property type="entry name" value="LigA"/>
    <property type="match status" value="1"/>
</dbReference>
<dbReference type="SMART" id="SM00292">
    <property type="entry name" value="BRCT"/>
    <property type="match status" value="1"/>
</dbReference>
<dbReference type="SMART" id="SM00278">
    <property type="entry name" value="HhH1"/>
    <property type="match status" value="3"/>
</dbReference>
<dbReference type="SMART" id="SM00532">
    <property type="entry name" value="LIGANc"/>
    <property type="match status" value="1"/>
</dbReference>
<dbReference type="SUPFAM" id="SSF52113">
    <property type="entry name" value="BRCT domain"/>
    <property type="match status" value="1"/>
</dbReference>
<dbReference type="SUPFAM" id="SSF56091">
    <property type="entry name" value="DNA ligase/mRNA capping enzyme, catalytic domain"/>
    <property type="match status" value="1"/>
</dbReference>
<dbReference type="SUPFAM" id="SSF50249">
    <property type="entry name" value="Nucleic acid-binding proteins"/>
    <property type="match status" value="1"/>
</dbReference>
<dbReference type="SUPFAM" id="SSF47781">
    <property type="entry name" value="RuvA domain 2-like"/>
    <property type="match status" value="1"/>
</dbReference>
<dbReference type="PROSITE" id="PS50172">
    <property type="entry name" value="BRCT"/>
    <property type="match status" value="1"/>
</dbReference>
<dbReference type="PROSITE" id="PS01055">
    <property type="entry name" value="DNA_LIGASE_N1"/>
    <property type="match status" value="1"/>
</dbReference>
<dbReference type="PROSITE" id="PS01056">
    <property type="entry name" value="DNA_LIGASE_N2"/>
    <property type="match status" value="1"/>
</dbReference>
<accession>Q92NM8</accession>
<sequence>MLNQRKSVEQLNEAEAAEELAFLAAELARHDMLYHGKDAPEISDADYDALKRRNDLIEERFPVLVREDSPSRKVGAAPSLTFAPVVHARPMLSLDNTFSDEDARAFVAGVYRFLGKLPDGSIAFTAEPKIDGLSMSLRYENRRLVTAATRGDGTTGENVTANVRTIGMIPQTLPADAPDVVEIRGEIYMAKSDFAALNAEMAAQGRPLYVNPRNTASGSLRQLDAKVTANRKLRFFAYAWGEMSAMPADTQLGMVETFKAWGFPVNPLMQRFFSADELLEHYHHIERERPDLDYDIDGVVYKVDRLDLQARLGFRSRSPRWATAHKFPAEQAFTRLKGIDIQVGRTGALTPVARLEPITVGGVVVTNATLHNEDYIRGVGNTGEPIRDGRDVRIGDMVIVQRAGDVIPQIVDVVMDERPEGAEPYRFPTTCPICGSHAVRDINEKTGKVDAVRRCTGGFVCRAQAVEHLKHFVSRNAFDIEGLGSKQIEFFFESEDENLRIRTAPEIFTLERRQEASLNKLENTDGFGKVSVRKLYEAINARRSIALHRLIYALGIRHVGETTAKLLARSYGSYEHFGAAMTEAAGFSGDAWNELNSIDGIGEVVARAIVEFYKEPRNLKVVSELLQEVTPESAELPVATDSPVAGKTVVFTGSLEKMTREEAKAKAESLGAKVAGSVSKKTDIVVAGPGAGSKLDKARELGVQTMDEDEWLALIGG</sequence>
<organism>
    <name type="scientific">Rhizobium meliloti (strain 1021)</name>
    <name type="common">Ensifer meliloti</name>
    <name type="synonym">Sinorhizobium meliloti</name>
    <dbReference type="NCBI Taxonomy" id="266834"/>
    <lineage>
        <taxon>Bacteria</taxon>
        <taxon>Pseudomonadati</taxon>
        <taxon>Pseudomonadota</taxon>
        <taxon>Alphaproteobacteria</taxon>
        <taxon>Hyphomicrobiales</taxon>
        <taxon>Rhizobiaceae</taxon>
        <taxon>Sinorhizobium/Ensifer group</taxon>
        <taxon>Sinorhizobium</taxon>
    </lineage>
</organism>
<keyword id="KW-0227">DNA damage</keyword>
<keyword id="KW-0234">DNA repair</keyword>
<keyword id="KW-0235">DNA replication</keyword>
<keyword id="KW-0436">Ligase</keyword>
<keyword id="KW-0460">Magnesium</keyword>
<keyword id="KW-0464">Manganese</keyword>
<keyword id="KW-0479">Metal-binding</keyword>
<keyword id="KW-0520">NAD</keyword>
<keyword id="KW-1185">Reference proteome</keyword>
<keyword id="KW-0862">Zinc</keyword>
<reference key="1">
    <citation type="journal article" date="2001" name="Proc. Natl. Acad. Sci. U.S.A.">
        <title>Analysis of the chromosome sequence of the legume symbiont Sinorhizobium meliloti strain 1021.</title>
        <authorList>
            <person name="Capela D."/>
            <person name="Barloy-Hubler F."/>
            <person name="Gouzy J."/>
            <person name="Bothe G."/>
            <person name="Ampe F."/>
            <person name="Batut J."/>
            <person name="Boistard P."/>
            <person name="Becker A."/>
            <person name="Boutry M."/>
            <person name="Cadieu E."/>
            <person name="Dreano S."/>
            <person name="Gloux S."/>
            <person name="Godrie T."/>
            <person name="Goffeau A."/>
            <person name="Kahn D."/>
            <person name="Kiss E."/>
            <person name="Lelaure V."/>
            <person name="Masuy D."/>
            <person name="Pohl T."/>
            <person name="Portetelle D."/>
            <person name="Puehler A."/>
            <person name="Purnelle B."/>
            <person name="Ramsperger U."/>
            <person name="Renard C."/>
            <person name="Thebault P."/>
            <person name="Vandenbol M."/>
            <person name="Weidner S."/>
            <person name="Galibert F."/>
        </authorList>
    </citation>
    <scope>NUCLEOTIDE SEQUENCE [LARGE SCALE GENOMIC DNA]</scope>
    <source>
        <strain>1021</strain>
    </source>
</reference>
<reference key="2">
    <citation type="journal article" date="2001" name="Science">
        <title>The composite genome of the legume symbiont Sinorhizobium meliloti.</title>
        <authorList>
            <person name="Galibert F."/>
            <person name="Finan T.M."/>
            <person name="Long S.R."/>
            <person name="Puehler A."/>
            <person name="Abola P."/>
            <person name="Ampe F."/>
            <person name="Barloy-Hubler F."/>
            <person name="Barnett M.J."/>
            <person name="Becker A."/>
            <person name="Boistard P."/>
            <person name="Bothe G."/>
            <person name="Boutry M."/>
            <person name="Bowser L."/>
            <person name="Buhrmester J."/>
            <person name="Cadieu E."/>
            <person name="Capela D."/>
            <person name="Chain P."/>
            <person name="Cowie A."/>
            <person name="Davis R.W."/>
            <person name="Dreano S."/>
            <person name="Federspiel N.A."/>
            <person name="Fisher R.F."/>
            <person name="Gloux S."/>
            <person name="Godrie T."/>
            <person name="Goffeau A."/>
            <person name="Golding B."/>
            <person name="Gouzy J."/>
            <person name="Gurjal M."/>
            <person name="Hernandez-Lucas I."/>
            <person name="Hong A."/>
            <person name="Huizar L."/>
            <person name="Hyman R.W."/>
            <person name="Jones T."/>
            <person name="Kahn D."/>
            <person name="Kahn M.L."/>
            <person name="Kalman S."/>
            <person name="Keating D.H."/>
            <person name="Kiss E."/>
            <person name="Komp C."/>
            <person name="Lelaure V."/>
            <person name="Masuy D."/>
            <person name="Palm C."/>
            <person name="Peck M.C."/>
            <person name="Pohl T.M."/>
            <person name="Portetelle D."/>
            <person name="Purnelle B."/>
            <person name="Ramsperger U."/>
            <person name="Surzycki R."/>
            <person name="Thebault P."/>
            <person name="Vandenbol M."/>
            <person name="Vorhoelter F.J."/>
            <person name="Weidner S."/>
            <person name="Wells D.H."/>
            <person name="Wong K."/>
            <person name="Yeh K.-C."/>
            <person name="Batut J."/>
        </authorList>
    </citation>
    <scope>NUCLEOTIDE SEQUENCE [LARGE SCALE GENOMIC DNA]</scope>
    <source>
        <strain>1021</strain>
    </source>
</reference>
<name>DNLJ_RHIME</name>
<feature type="chain" id="PRO_0000313393" description="DNA ligase">
    <location>
        <begin position="1"/>
        <end position="717"/>
    </location>
</feature>
<feature type="domain" description="BRCT" evidence="1">
    <location>
        <begin position="639"/>
        <end position="717"/>
    </location>
</feature>
<feature type="active site" description="N6-AMP-lysine intermediate" evidence="1">
    <location>
        <position position="129"/>
    </location>
</feature>
<feature type="binding site" evidence="1">
    <location>
        <begin position="44"/>
        <end position="48"/>
    </location>
    <ligand>
        <name>NAD(+)</name>
        <dbReference type="ChEBI" id="CHEBI:57540"/>
    </ligand>
</feature>
<feature type="binding site" evidence="1">
    <location>
        <begin position="93"/>
        <end position="94"/>
    </location>
    <ligand>
        <name>NAD(+)</name>
        <dbReference type="ChEBI" id="CHEBI:57540"/>
    </ligand>
</feature>
<feature type="binding site" evidence="1">
    <location>
        <position position="127"/>
    </location>
    <ligand>
        <name>NAD(+)</name>
        <dbReference type="ChEBI" id="CHEBI:57540"/>
    </ligand>
</feature>
<feature type="binding site" evidence="1">
    <location>
        <position position="150"/>
    </location>
    <ligand>
        <name>NAD(+)</name>
        <dbReference type="ChEBI" id="CHEBI:57540"/>
    </ligand>
</feature>
<feature type="binding site" evidence="1">
    <location>
        <position position="186"/>
    </location>
    <ligand>
        <name>NAD(+)</name>
        <dbReference type="ChEBI" id="CHEBI:57540"/>
    </ligand>
</feature>
<feature type="binding site" evidence="1">
    <location>
        <position position="302"/>
    </location>
    <ligand>
        <name>NAD(+)</name>
        <dbReference type="ChEBI" id="CHEBI:57540"/>
    </ligand>
</feature>
<feature type="binding site" evidence="1">
    <location>
        <position position="326"/>
    </location>
    <ligand>
        <name>NAD(+)</name>
        <dbReference type="ChEBI" id="CHEBI:57540"/>
    </ligand>
</feature>
<feature type="binding site" evidence="1">
    <location>
        <position position="431"/>
    </location>
    <ligand>
        <name>Zn(2+)</name>
        <dbReference type="ChEBI" id="CHEBI:29105"/>
    </ligand>
</feature>
<feature type="binding site" evidence="1">
    <location>
        <position position="434"/>
    </location>
    <ligand>
        <name>Zn(2+)</name>
        <dbReference type="ChEBI" id="CHEBI:29105"/>
    </ligand>
</feature>
<feature type="binding site" evidence="1">
    <location>
        <position position="455"/>
    </location>
    <ligand>
        <name>Zn(2+)</name>
        <dbReference type="ChEBI" id="CHEBI:29105"/>
    </ligand>
</feature>
<feature type="binding site" evidence="1">
    <location>
        <position position="461"/>
    </location>
    <ligand>
        <name>Zn(2+)</name>
        <dbReference type="ChEBI" id="CHEBI:29105"/>
    </ligand>
</feature>